<dbReference type="EMBL" id="AJ003024">
    <property type="protein sequence ID" value="CAA05815.1"/>
    <property type="molecule type" value="mRNA"/>
</dbReference>
<dbReference type="RefSeq" id="NP_001075594.1">
    <property type="nucleotide sequence ID" value="NM_001082125.1"/>
</dbReference>
<dbReference type="RefSeq" id="XP_051689612.1">
    <property type="nucleotide sequence ID" value="XM_051833652.2"/>
</dbReference>
<dbReference type="SMR" id="O19049"/>
<dbReference type="FunCoup" id="O19049">
    <property type="interactions" value="2874"/>
</dbReference>
<dbReference type="STRING" id="9986.ENSOCUP00000008932"/>
<dbReference type="PaxDb" id="9986-ENSOCUP00000008932"/>
<dbReference type="Ensembl" id="ENSOCUT00000010369.2">
    <property type="protein sequence ID" value="ENSOCUP00000008932.2"/>
    <property type="gene ID" value="ENSOCUG00000010364.3"/>
</dbReference>
<dbReference type="GeneID" id="100008849"/>
<dbReference type="KEGG" id="ocu:100008849"/>
<dbReference type="CTD" id="3190"/>
<dbReference type="eggNOG" id="KOG2192">
    <property type="taxonomic scope" value="Eukaryota"/>
</dbReference>
<dbReference type="GeneTree" id="ENSGT00940000153434"/>
<dbReference type="HOGENOM" id="CLU_022670_5_1_1"/>
<dbReference type="InParanoid" id="O19049"/>
<dbReference type="OMA" id="KALRTDX"/>
<dbReference type="OrthoDB" id="1937934at2759"/>
<dbReference type="TreeFam" id="TF316335"/>
<dbReference type="Proteomes" id="UP000001811">
    <property type="component" value="Unplaced"/>
</dbReference>
<dbReference type="Bgee" id="ENSOCUG00000010364">
    <property type="expression patterns" value="Expressed in embryo and 14 other cell types or tissues"/>
</dbReference>
<dbReference type="GO" id="GO:0070161">
    <property type="term" value="C:anchoring junction"/>
    <property type="evidence" value="ECO:0007669"/>
    <property type="project" value="UniProtKB-KW"/>
</dbReference>
<dbReference type="GO" id="GO:0042995">
    <property type="term" value="C:cell projection"/>
    <property type="evidence" value="ECO:0007669"/>
    <property type="project" value="UniProtKB-KW"/>
</dbReference>
<dbReference type="GO" id="GO:0000785">
    <property type="term" value="C:chromatin"/>
    <property type="evidence" value="ECO:0000250"/>
    <property type="project" value="UniProtKB"/>
</dbReference>
<dbReference type="GO" id="GO:0005737">
    <property type="term" value="C:cytoplasm"/>
    <property type="evidence" value="ECO:0000250"/>
    <property type="project" value="UniProtKB"/>
</dbReference>
<dbReference type="GO" id="GO:0005654">
    <property type="term" value="C:nucleoplasm"/>
    <property type="evidence" value="ECO:0007669"/>
    <property type="project" value="UniProtKB-SubCell"/>
</dbReference>
<dbReference type="GO" id="GO:0005634">
    <property type="term" value="C:nucleus"/>
    <property type="evidence" value="ECO:0000250"/>
    <property type="project" value="UniProtKB"/>
</dbReference>
<dbReference type="GO" id="GO:0002102">
    <property type="term" value="C:podosome"/>
    <property type="evidence" value="ECO:0007669"/>
    <property type="project" value="UniProtKB-SubCell"/>
</dbReference>
<dbReference type="GO" id="GO:1990904">
    <property type="term" value="C:ribonucleoprotein complex"/>
    <property type="evidence" value="ECO:0000250"/>
    <property type="project" value="UniProtKB"/>
</dbReference>
<dbReference type="GO" id="GO:0005681">
    <property type="term" value="C:spliceosomal complex"/>
    <property type="evidence" value="ECO:0007669"/>
    <property type="project" value="UniProtKB-KW"/>
</dbReference>
<dbReference type="GO" id="GO:0003677">
    <property type="term" value="F:DNA binding"/>
    <property type="evidence" value="ECO:0007669"/>
    <property type="project" value="UniProtKB-KW"/>
</dbReference>
<dbReference type="GO" id="GO:0003723">
    <property type="term" value="F:RNA binding"/>
    <property type="evidence" value="ECO:0007669"/>
    <property type="project" value="UniProtKB-KW"/>
</dbReference>
<dbReference type="GO" id="GO:0006397">
    <property type="term" value="P:mRNA processing"/>
    <property type="evidence" value="ECO:0007669"/>
    <property type="project" value="UniProtKB-KW"/>
</dbReference>
<dbReference type="GO" id="GO:0008380">
    <property type="term" value="P:RNA splicing"/>
    <property type="evidence" value="ECO:0007669"/>
    <property type="project" value="UniProtKB-KW"/>
</dbReference>
<dbReference type="CDD" id="cd22432">
    <property type="entry name" value="KH-I_HNRNPK_rpt1"/>
    <property type="match status" value="1"/>
</dbReference>
<dbReference type="CDD" id="cd22433">
    <property type="entry name" value="KH-I_HNRNPK_rpt2"/>
    <property type="match status" value="1"/>
</dbReference>
<dbReference type="CDD" id="cd22434">
    <property type="entry name" value="KH-I_HNRNPK_rpt3"/>
    <property type="match status" value="1"/>
</dbReference>
<dbReference type="FunFam" id="3.30.1370.10:FF:000021">
    <property type="entry name" value="Heterogeneous nuclear ribonucleoprotein K, like"/>
    <property type="match status" value="1"/>
</dbReference>
<dbReference type="FunFam" id="3.30.1370.10:FF:000023">
    <property type="entry name" value="Heterogeneous nuclear ribonucleoprotein K, like"/>
    <property type="match status" value="1"/>
</dbReference>
<dbReference type="FunFam" id="3.30.1370.10:FF:000025">
    <property type="entry name" value="Heterogeneous nuclear ribonucleoprotein K, like"/>
    <property type="match status" value="1"/>
</dbReference>
<dbReference type="Gene3D" id="3.30.1370.10">
    <property type="entry name" value="K Homology domain, type 1"/>
    <property type="match status" value="3"/>
</dbReference>
<dbReference type="InterPro" id="IPR004087">
    <property type="entry name" value="KH_dom"/>
</dbReference>
<dbReference type="InterPro" id="IPR004088">
    <property type="entry name" value="KH_dom_type_1"/>
</dbReference>
<dbReference type="InterPro" id="IPR036612">
    <property type="entry name" value="KH_dom_type_1_sf"/>
</dbReference>
<dbReference type="InterPro" id="IPR012987">
    <property type="entry name" value="ROK_N"/>
</dbReference>
<dbReference type="PANTHER" id="PTHR10288">
    <property type="entry name" value="KH DOMAIN CONTAINING RNA BINDING PROTEIN"/>
    <property type="match status" value="1"/>
</dbReference>
<dbReference type="Pfam" id="PF00013">
    <property type="entry name" value="KH_1"/>
    <property type="match status" value="3"/>
</dbReference>
<dbReference type="Pfam" id="PF08067">
    <property type="entry name" value="ROKNT"/>
    <property type="match status" value="1"/>
</dbReference>
<dbReference type="SMART" id="SM00322">
    <property type="entry name" value="KH"/>
    <property type="match status" value="3"/>
</dbReference>
<dbReference type="SUPFAM" id="SSF54791">
    <property type="entry name" value="Eukaryotic type KH-domain (KH-domain type I)"/>
    <property type="match status" value="3"/>
</dbReference>
<dbReference type="PROSITE" id="PS50084">
    <property type="entry name" value="KH_TYPE_1"/>
    <property type="match status" value="3"/>
</dbReference>
<reference key="1">
    <citation type="journal article" date="1999" name="Nucleic Acids Res.">
        <title>Tissue-specific translational regulation of alternative rabbit 15-lipoxygenase mRNAs differing in their 3'-untranslated regions.</title>
        <authorList>
            <person name="Thiele B.J."/>
            <person name="Berger M."/>
            <person name="Huth A."/>
            <person name="Reimann I."/>
            <person name="Schwarz K."/>
            <person name="Thiele H."/>
        </authorList>
    </citation>
    <scope>NUCLEOTIDE SEQUENCE [MRNA]</scope>
</reference>
<evidence type="ECO:0000250" key="1"/>
<evidence type="ECO:0000250" key="2">
    <source>
        <dbReference type="UniProtKB" id="P61978"/>
    </source>
</evidence>
<evidence type="ECO:0000250" key="3">
    <source>
        <dbReference type="UniProtKB" id="P61979"/>
    </source>
</evidence>
<evidence type="ECO:0000250" key="4">
    <source>
        <dbReference type="UniProtKB" id="P61980"/>
    </source>
</evidence>
<evidence type="ECO:0000255" key="5">
    <source>
        <dbReference type="PROSITE-ProRule" id="PRU00117"/>
    </source>
</evidence>
<evidence type="ECO:0000256" key="6">
    <source>
        <dbReference type="SAM" id="MobiDB-lite"/>
    </source>
</evidence>
<keyword id="KW-0007">Acetylation</keyword>
<keyword id="KW-0010">Activator</keyword>
<keyword id="KW-0965">Cell junction</keyword>
<keyword id="KW-0966">Cell projection</keyword>
<keyword id="KW-0963">Cytoplasm</keyword>
<keyword id="KW-0238">DNA-binding</keyword>
<keyword id="KW-0325">Glycoprotein</keyword>
<keyword id="KW-1017">Isopeptide bond</keyword>
<keyword id="KW-0488">Methylation</keyword>
<keyword id="KW-0507">mRNA processing</keyword>
<keyword id="KW-0508">mRNA splicing</keyword>
<keyword id="KW-0539">Nucleus</keyword>
<keyword id="KW-0597">Phosphoprotein</keyword>
<keyword id="KW-1185">Reference proteome</keyword>
<keyword id="KW-0677">Repeat</keyword>
<keyword id="KW-0678">Repressor</keyword>
<keyword id="KW-0687">Ribonucleoprotein</keyword>
<keyword id="KW-0694">RNA-binding</keyword>
<keyword id="KW-0747">Spliceosome</keyword>
<keyword id="KW-0804">Transcription</keyword>
<keyword id="KW-0805">Transcription regulation</keyword>
<keyword id="KW-0832">Ubl conjugation</keyword>
<name>HNRPK_RABIT</name>
<accession>O19049</accession>
<sequence>METEQPEETFPNTETNGEFGKRPAEDMEEEQAFKRSRNTDEMVELRILLQSKNAGAVIGKGGKNIKALRTDYNASVSVPDSSGPERILSISADIETIGEILKKIIPTLEEGLQLPSPTATSQLPLESDAVECLNYQHFKGSDFDCELRLLIHQSLAGGIIGVKGAKIKELRENTQTTIKLFQECCPHSTDRVVLIGGKPDRVVECIKIILDLISESPIKGRAQPYDPNFYDETYDYGGFTMMFDDRRGRPVGFPMRGRGGFDRMPPGRGGRPMPPSRRDYDDMSPRRGPPPPPPGRGGRGGSRARNLPLPPPPPPRGGDLMAYDRRGRPGDRYDGMVGFSADETWDSAIDTWSPSEWQMAYEPQGGSGYDYSYAGGRGSYGDLGGPIITTQVTIPKDLAGSIIGKGGQRIKQIRHESGASIKIDEPLEGSEDRIITITGTQDQIQNAQYLLQNSVKQYSGKFF</sequence>
<organism>
    <name type="scientific">Oryctolagus cuniculus</name>
    <name type="common">Rabbit</name>
    <dbReference type="NCBI Taxonomy" id="9986"/>
    <lineage>
        <taxon>Eukaryota</taxon>
        <taxon>Metazoa</taxon>
        <taxon>Chordata</taxon>
        <taxon>Craniata</taxon>
        <taxon>Vertebrata</taxon>
        <taxon>Euteleostomi</taxon>
        <taxon>Mammalia</taxon>
        <taxon>Eutheria</taxon>
        <taxon>Euarchontoglires</taxon>
        <taxon>Glires</taxon>
        <taxon>Lagomorpha</taxon>
        <taxon>Leporidae</taxon>
        <taxon>Oryctolagus</taxon>
    </lineage>
</organism>
<protein>
    <recommendedName>
        <fullName>Heterogeneous nuclear ribonucleoprotein K</fullName>
        <shortName>hnRNP K</shortName>
    </recommendedName>
</protein>
<feature type="chain" id="PRO_0000050098" description="Heterogeneous nuclear ribonucleoprotein K">
    <location>
        <begin position="1"/>
        <end position="463"/>
    </location>
</feature>
<feature type="domain" description="KH 1" evidence="5">
    <location>
        <begin position="42"/>
        <end position="104"/>
    </location>
</feature>
<feature type="repeat" description="1-1">
    <location>
        <begin position="54"/>
        <end position="76"/>
    </location>
</feature>
<feature type="repeat" description="3-1">
    <location>
        <begin position="59"/>
        <end position="62"/>
    </location>
</feature>
<feature type="domain" description="KH 2" evidence="5">
    <location>
        <begin position="144"/>
        <end position="209"/>
    </location>
</feature>
<feature type="repeat" description="2-1">
    <location>
        <begin position="245"/>
        <end position="250"/>
    </location>
</feature>
<feature type="repeat" description="3-2">
    <location>
        <begin position="257"/>
        <end position="260"/>
    </location>
</feature>
<feature type="repeat" description="3-3">
    <location>
        <begin position="267"/>
        <end position="270"/>
    </location>
</feature>
<feature type="repeat" description="3-4">
    <location>
        <begin position="295"/>
        <end position="298"/>
    </location>
</feature>
<feature type="repeat" description="2-2">
    <location>
        <begin position="324"/>
        <end position="329"/>
    </location>
</feature>
<feature type="domain" description="KH 3" evidence="5">
    <location>
        <begin position="387"/>
        <end position="451"/>
    </location>
</feature>
<feature type="repeat" description="1-2">
    <location>
        <begin position="399"/>
        <end position="421"/>
    </location>
</feature>
<feature type="repeat" description="3-5">
    <location>
        <begin position="404"/>
        <end position="407"/>
    </location>
</feature>
<feature type="region of interest" description="Necessary for interaction with DDX1" evidence="1">
    <location>
        <begin position="1"/>
        <end position="276"/>
    </location>
</feature>
<feature type="region of interest" description="Disordered" evidence="6">
    <location>
        <begin position="1"/>
        <end position="37"/>
    </location>
</feature>
<feature type="region of interest" description="2 X 22 AA approximate repeats">
    <location>
        <begin position="54"/>
        <end position="421"/>
    </location>
</feature>
<feature type="region of interest" description="5 X 4 AA repeats of G-X-G-G">
    <location>
        <begin position="59"/>
        <end position="407"/>
    </location>
</feature>
<feature type="region of interest" description="Interaction with ZIK1" evidence="1">
    <location>
        <begin position="209"/>
        <end position="337"/>
    </location>
</feature>
<feature type="region of interest" description="RNA-binding RGG-box">
    <location>
        <begin position="236"/>
        <end position="273"/>
    </location>
</feature>
<feature type="region of interest" description="2 X 6 AA repeats of D-R-R-G-R-P">
    <location>
        <begin position="245"/>
        <end position="329"/>
    </location>
</feature>
<feature type="region of interest" description="Disordered" evidence="6">
    <location>
        <begin position="250"/>
        <end position="329"/>
    </location>
</feature>
<feature type="compositionally biased region" description="Basic and acidic residues" evidence="6">
    <location>
        <begin position="19"/>
        <end position="37"/>
    </location>
</feature>
<feature type="compositionally biased region" description="Low complexity" evidence="6">
    <location>
        <begin position="252"/>
        <end position="266"/>
    </location>
</feature>
<feature type="compositionally biased region" description="Basic and acidic residues" evidence="6">
    <location>
        <begin position="276"/>
        <end position="285"/>
    </location>
</feature>
<feature type="modified residue" description="N-acetylmethionine" evidence="2">
    <location>
        <position position="1"/>
    </location>
</feature>
<feature type="modified residue" description="N6-acetyllysine; alternate" evidence="3">
    <location>
        <position position="34"/>
    </location>
</feature>
<feature type="modified residue" description="Phosphoserine" evidence="2">
    <location>
        <position position="36"/>
    </location>
</feature>
<feature type="modified residue" description="Phosphothreonine" evidence="3">
    <location>
        <position position="39"/>
    </location>
</feature>
<feature type="modified residue" description="Phosphoserine" evidence="2">
    <location>
        <position position="75"/>
    </location>
</feature>
<feature type="modified residue" description="Phosphoserine" evidence="2">
    <location>
        <position position="116"/>
    </location>
</feature>
<feature type="modified residue" description="N6-acetyllysine" evidence="3">
    <location>
        <position position="198"/>
    </location>
</feature>
<feature type="modified residue" description="Phosphoserine" evidence="2">
    <location>
        <position position="214"/>
    </location>
</feature>
<feature type="modified residue" description="Phosphoserine" evidence="2">
    <location>
        <position position="216"/>
    </location>
</feature>
<feature type="modified residue" description="N6-succinyllysine; alternate" evidence="3">
    <location>
        <position position="219"/>
    </location>
</feature>
<feature type="modified residue" description="Phosphoserine" evidence="2">
    <location>
        <position position="284"/>
    </location>
</feature>
<feature type="modified residue" description="Omega-N-methylarginine" evidence="2">
    <location>
        <position position="316"/>
    </location>
</feature>
<feature type="modified residue" description="Omega-N-methylarginine" evidence="3">
    <location>
        <position position="377"/>
    </location>
</feature>
<feature type="modified residue" description="Phosphoserine" evidence="2">
    <location>
        <position position="379"/>
    </location>
</feature>
<feature type="modified residue" description="Phosphotyrosine" evidence="2">
    <location>
        <position position="380"/>
    </location>
</feature>
<feature type="modified residue" description="N6-acetyllysine; alternate" evidence="3">
    <location>
        <position position="405"/>
    </location>
</feature>
<feature type="modified residue" description="Phosphoserine" evidence="2">
    <location>
        <position position="420"/>
    </location>
</feature>
<feature type="cross-link" description="Glycyl lysine isopeptide (Lys-Gly) (interchain with G-Cter in SUMO1); alternate" evidence="2">
    <location>
        <position position="34"/>
    </location>
</feature>
<feature type="cross-link" description="Glycyl lysine isopeptide (Lys-Gly) (interchain with G-Cter in SUMO2); alternate" evidence="2">
    <location>
        <position position="34"/>
    </location>
</feature>
<feature type="cross-link" description="Glycyl lysine isopeptide (Lys-Gly) (interchain with G-Cter in SUMO2)" evidence="2">
    <location>
        <position position="52"/>
    </location>
</feature>
<feature type="cross-link" description="Glycyl lysine isopeptide (Lys-Gly) (interchain with G-Cter in SUMO2)" evidence="2">
    <location>
        <position position="60"/>
    </location>
</feature>
<feature type="cross-link" description="Glycyl lysine isopeptide (Lys-Gly) (interchain with G-Cter in SUMO1); alternate" evidence="2">
    <location>
        <position position="163"/>
    </location>
</feature>
<feature type="cross-link" description="Glycyl lysine isopeptide (Lys-Gly) (interchain with G-Cter in SUMO2); alternate" evidence="2">
    <location>
        <position position="163"/>
    </location>
</feature>
<feature type="cross-link" description="Glycyl lysine isopeptide (Lys-Gly) (interchain with G-Cter in SUMO2); alternate" evidence="2">
    <location>
        <position position="219"/>
    </location>
</feature>
<feature type="cross-link" description="Glycyl lysine isopeptide (Lys-Gly) (interchain with G-Cter in SUMO2); alternate" evidence="2">
    <location>
        <position position="405"/>
    </location>
</feature>
<feature type="cross-link" description="Glycyl lysine isopeptide (Lys-Gly) (interchain with G-Cter in SUMO); alternate" evidence="1">
    <location>
        <position position="422"/>
    </location>
</feature>
<feature type="cross-link" description="Glycyl lysine isopeptide (Lys-Gly) (interchain with G-Cter in SUMO1); alternate" evidence="2">
    <location>
        <position position="422"/>
    </location>
</feature>
<feature type="cross-link" description="Glycyl lysine isopeptide (Lys-Gly) (interchain with G-Cter in SUMO2); alternate" evidence="2">
    <location>
        <position position="422"/>
    </location>
</feature>
<comment type="function">
    <text evidence="1 2">One of the major pre-mRNA-binding proteins. Binds tenaciously to poly(C) sequences. Likely to play a role in the nuclear metabolism of hnRNAs, particularly for pre-mRNAs that contain cytidine-rich sequences. Can also bind poly(C) single-stranded DNA. Plays an important role in p53/TP53 response to DNA damage, acting at the level of both transcription activation and repression. When sumoylated, acts as a transcriptional coactivator of p53/TP53, playing a role in p21/CDKN1A and 14-3-3 sigma/SFN induction. As far as transcription repression is concerned, acts by interacting with long intergenic RNA p21 (lincRNA-p21), a non-coding RNA induced by p53/TP53. This interaction is necessary for the induction of apoptosis, but not cell cycle arrest (By similarity). As part of a ribonucleoprotein complex composed at least of ZNF827, HNRNPL and the circular RNA circZNF827 that nucleates the complex on chromatin, may negatively regulate the transcription of genes involved in neuronal differentiation (By similarity).</text>
</comment>
<comment type="subunit">
    <text evidence="2 3 4">Identified in the spliceosome C complex. Interacts with ANKRD28, RBM42 and ZIK1. Interacts with DDX1. Interacts with MDM2; this interaction leads to ubiquitination and proteasomal degradation. Interacts with p53/TP53. Interacts with BRDT (By similarity). Interacts with IVNS1ABP (By similarity). Interacts with PPIA/CYPA (By similarity). Part of a transcription inhibitory ribonucleoprotein complex composed at least of the circular RNA circZNF827, ZNF827 and HNRNPL (By similarity).</text>
</comment>
<comment type="subcellular location">
    <subcellularLocation>
        <location evidence="2">Cytoplasm</location>
    </subcellularLocation>
    <subcellularLocation>
        <location evidence="2">Nucleus</location>
        <location evidence="2">Nucleoplasm</location>
    </subcellularLocation>
    <subcellularLocation>
        <location evidence="2">Cell projection</location>
        <location evidence="2">Podosome</location>
    </subcellularLocation>
</comment>
<comment type="PTM">
    <text evidence="1">Sumoylated by CBX4. Sumoylation is increased upon DNA damage, such as that produced by doxorubicin, etoposide, UV light and camptothecin, due to enhanced CBX4 phosphorylation by HIPK2 under these conditions (By similarity).</text>
</comment>
<comment type="PTM">
    <text evidence="1">Ubiquitinated by MDM2. Doxorubicin treatment does not affect monoubiquitination, but slightly decreases HNRNPK poly-ubiquitination (By similarity).</text>
</comment>
<comment type="PTM">
    <text evidence="1">O-glycosylated (O-GlcNAcylated), in a cell cycle-dependent manner.</text>
</comment>
<proteinExistence type="evidence at transcript level"/>
<gene>
    <name type="primary">HNRNPK</name>
    <name type="synonym">HNRPK</name>
</gene>